<proteinExistence type="inferred from homology"/>
<comment type="similarity">
    <text evidence="1">Belongs to the UPF0178 family.</text>
</comment>
<reference key="1">
    <citation type="submission" date="2008-12" db="EMBL/GenBank/DDBJ databases">
        <title>Complete sequence of chromosome of Shewanella baltica OS223.</title>
        <authorList>
            <consortium name="US DOE Joint Genome Institute"/>
            <person name="Lucas S."/>
            <person name="Copeland A."/>
            <person name="Lapidus A."/>
            <person name="Glavina del Rio T."/>
            <person name="Dalin E."/>
            <person name="Tice H."/>
            <person name="Bruce D."/>
            <person name="Goodwin L."/>
            <person name="Pitluck S."/>
            <person name="Chertkov O."/>
            <person name="Meincke L."/>
            <person name="Brettin T."/>
            <person name="Detter J.C."/>
            <person name="Han C."/>
            <person name="Kuske C.R."/>
            <person name="Larimer F."/>
            <person name="Land M."/>
            <person name="Hauser L."/>
            <person name="Kyrpides N."/>
            <person name="Ovchinnikova G."/>
            <person name="Brettar I."/>
            <person name="Rodrigues J."/>
            <person name="Konstantinidis K."/>
            <person name="Tiedje J."/>
        </authorList>
    </citation>
    <scope>NUCLEOTIDE SEQUENCE [LARGE SCALE GENOMIC DNA]</scope>
    <source>
        <strain>OS223</strain>
    </source>
</reference>
<evidence type="ECO:0000255" key="1">
    <source>
        <dbReference type="HAMAP-Rule" id="MF_00489"/>
    </source>
</evidence>
<dbReference type="EMBL" id="CP001252">
    <property type="protein sequence ID" value="ACK47008.1"/>
    <property type="molecule type" value="Genomic_DNA"/>
</dbReference>
<dbReference type="RefSeq" id="WP_012587870.1">
    <property type="nucleotide sequence ID" value="NC_011663.1"/>
</dbReference>
<dbReference type="SMR" id="B8EAH9"/>
<dbReference type="KEGG" id="sbp:Sbal223_2514"/>
<dbReference type="HOGENOM" id="CLU_106619_1_0_6"/>
<dbReference type="Proteomes" id="UP000002507">
    <property type="component" value="Chromosome"/>
</dbReference>
<dbReference type="CDD" id="cd18720">
    <property type="entry name" value="PIN_YqxD-like"/>
    <property type="match status" value="1"/>
</dbReference>
<dbReference type="HAMAP" id="MF_00489">
    <property type="entry name" value="UPF0178"/>
    <property type="match status" value="1"/>
</dbReference>
<dbReference type="InterPro" id="IPR003791">
    <property type="entry name" value="UPF0178"/>
</dbReference>
<dbReference type="NCBIfam" id="NF001095">
    <property type="entry name" value="PRK00124.1"/>
    <property type="match status" value="1"/>
</dbReference>
<dbReference type="PANTHER" id="PTHR35146">
    <property type="entry name" value="UPF0178 PROTEIN YAII"/>
    <property type="match status" value="1"/>
</dbReference>
<dbReference type="PANTHER" id="PTHR35146:SF1">
    <property type="entry name" value="UPF0178 PROTEIN YAII"/>
    <property type="match status" value="1"/>
</dbReference>
<dbReference type="Pfam" id="PF02639">
    <property type="entry name" value="DUF188"/>
    <property type="match status" value="1"/>
</dbReference>
<organism>
    <name type="scientific">Shewanella baltica (strain OS223)</name>
    <dbReference type="NCBI Taxonomy" id="407976"/>
    <lineage>
        <taxon>Bacteria</taxon>
        <taxon>Pseudomonadati</taxon>
        <taxon>Pseudomonadota</taxon>
        <taxon>Gammaproteobacteria</taxon>
        <taxon>Alteromonadales</taxon>
        <taxon>Shewanellaceae</taxon>
        <taxon>Shewanella</taxon>
    </lineage>
</organism>
<protein>
    <recommendedName>
        <fullName evidence="1">UPF0178 protein Sbal223_2514</fullName>
    </recommendedName>
</protein>
<gene>
    <name type="ordered locus">Sbal223_2514</name>
</gene>
<sequence>MSDYKIWVDADACPNPIKEILFRAAERKALPLVLVANQMIRIPPSPYISQIRVGAGFDVADQYIVDHVEPTHLVITADIPLAALIIEKGALALNPRGELYTVDNIKQKLTMRDFMEDLRGSGVHTGGPDSFSQADKQAFANSLDKWLVRV</sequence>
<feature type="chain" id="PRO_1000197836" description="UPF0178 protein Sbal223_2514">
    <location>
        <begin position="1"/>
        <end position="150"/>
    </location>
</feature>
<name>Y2514_SHEB2</name>
<accession>B8EAH9</accession>